<evidence type="ECO:0000255" key="1"/>
<evidence type="ECO:0000255" key="2">
    <source>
        <dbReference type="PROSITE-ProRule" id="PRU00129"/>
    </source>
</evidence>
<evidence type="ECO:0000305" key="3"/>
<proteinExistence type="evidence at transcript level"/>
<feature type="chain" id="PRO_0000429283" description="MATH domain and coiled-coil domain-containing protein At2g42460">
    <location>
        <begin position="1"/>
        <end position="299"/>
    </location>
</feature>
<feature type="domain" description="MATH" evidence="2">
    <location>
        <begin position="7"/>
        <end position="130"/>
    </location>
</feature>
<feature type="coiled-coil region" evidence="1">
    <location>
        <begin position="225"/>
        <end position="262"/>
    </location>
</feature>
<feature type="sequence conflict" description="In Ref. 3; BAC42698." evidence="3" ref="3">
    <original>K</original>
    <variation>R</variation>
    <location>
        <position position="200"/>
    </location>
</feature>
<accession>F4IN32</accession>
<accession>F4IN31</accession>
<accession>Q8GXS4</accession>
<accession>Q9SLB4</accession>
<organism>
    <name type="scientific">Arabidopsis thaliana</name>
    <name type="common">Mouse-ear cress</name>
    <dbReference type="NCBI Taxonomy" id="3702"/>
    <lineage>
        <taxon>Eukaryota</taxon>
        <taxon>Viridiplantae</taxon>
        <taxon>Streptophyta</taxon>
        <taxon>Embryophyta</taxon>
        <taxon>Tracheophyta</taxon>
        <taxon>Spermatophyta</taxon>
        <taxon>Magnoliopsida</taxon>
        <taxon>eudicotyledons</taxon>
        <taxon>Gunneridae</taxon>
        <taxon>Pentapetalae</taxon>
        <taxon>rosids</taxon>
        <taxon>malvids</taxon>
        <taxon>Brassicales</taxon>
        <taxon>Brassicaceae</taxon>
        <taxon>Camelineae</taxon>
        <taxon>Arabidopsis</taxon>
    </lineage>
</organism>
<keyword id="KW-0175">Coiled coil</keyword>
<keyword id="KW-1185">Reference proteome</keyword>
<protein>
    <recommendedName>
        <fullName>MATH domain and coiled-coil domain-containing protein At2g42460</fullName>
    </recommendedName>
    <alternativeName>
        <fullName>RTM3-like protein At2g42460</fullName>
    </alternativeName>
</protein>
<gene>
    <name type="ordered locus">At2g42460</name>
    <name type="ORF">MHK10.18</name>
</gene>
<reference key="1">
    <citation type="journal article" date="1999" name="Nature">
        <title>Sequence and analysis of chromosome 2 of the plant Arabidopsis thaliana.</title>
        <authorList>
            <person name="Lin X."/>
            <person name="Kaul S."/>
            <person name="Rounsley S.D."/>
            <person name="Shea T.P."/>
            <person name="Benito M.-I."/>
            <person name="Town C.D."/>
            <person name="Fujii C.Y."/>
            <person name="Mason T.M."/>
            <person name="Bowman C.L."/>
            <person name="Barnstead M.E."/>
            <person name="Feldblyum T.V."/>
            <person name="Buell C.R."/>
            <person name="Ketchum K.A."/>
            <person name="Lee J.J."/>
            <person name="Ronning C.M."/>
            <person name="Koo H.L."/>
            <person name="Moffat K.S."/>
            <person name="Cronin L.A."/>
            <person name="Shen M."/>
            <person name="Pai G."/>
            <person name="Van Aken S."/>
            <person name="Umayam L."/>
            <person name="Tallon L.J."/>
            <person name="Gill J.E."/>
            <person name="Adams M.D."/>
            <person name="Carrera A.J."/>
            <person name="Creasy T.H."/>
            <person name="Goodman H.M."/>
            <person name="Somerville C.R."/>
            <person name="Copenhaver G.P."/>
            <person name="Preuss D."/>
            <person name="Nierman W.C."/>
            <person name="White O."/>
            <person name="Eisen J.A."/>
            <person name="Salzberg S.L."/>
            <person name="Fraser C.M."/>
            <person name="Venter J.C."/>
        </authorList>
    </citation>
    <scope>NUCLEOTIDE SEQUENCE [LARGE SCALE GENOMIC DNA]</scope>
    <source>
        <strain>cv. Columbia</strain>
    </source>
</reference>
<reference key="2">
    <citation type="journal article" date="2017" name="Plant J.">
        <title>Araport11: a complete reannotation of the Arabidopsis thaliana reference genome.</title>
        <authorList>
            <person name="Cheng C.Y."/>
            <person name="Krishnakumar V."/>
            <person name="Chan A.P."/>
            <person name="Thibaud-Nissen F."/>
            <person name="Schobel S."/>
            <person name="Town C.D."/>
        </authorList>
    </citation>
    <scope>GENOME REANNOTATION</scope>
    <source>
        <strain>cv. Columbia</strain>
    </source>
</reference>
<reference key="3">
    <citation type="journal article" date="2002" name="Science">
        <title>Functional annotation of a full-length Arabidopsis cDNA collection.</title>
        <authorList>
            <person name="Seki M."/>
            <person name="Narusaka M."/>
            <person name="Kamiya A."/>
            <person name="Ishida J."/>
            <person name="Satou M."/>
            <person name="Sakurai T."/>
            <person name="Nakajima M."/>
            <person name="Enju A."/>
            <person name="Akiyama K."/>
            <person name="Oono Y."/>
            <person name="Muramatsu M."/>
            <person name="Hayashizaki Y."/>
            <person name="Kawai J."/>
            <person name="Carninci P."/>
            <person name="Itoh M."/>
            <person name="Ishii Y."/>
            <person name="Arakawa T."/>
            <person name="Shibata K."/>
            <person name="Shinagawa A."/>
            <person name="Shinozaki K."/>
        </authorList>
    </citation>
    <scope>NUCLEOTIDE SEQUENCE [LARGE SCALE MRNA]</scope>
    <source>
        <strain>cv. Columbia</strain>
    </source>
</reference>
<reference key="4">
    <citation type="journal article" date="2010" name="Plant Physiol.">
        <title>RTM3, which controls long-distance movement of potyviruses, is a member of a new plant gene family encoding a meprin and TRAF homology domain-containing protein.</title>
        <authorList>
            <person name="Cosson P."/>
            <person name="Sofer L."/>
            <person name="Le Q.H."/>
            <person name="Leger V."/>
            <person name="Schurdi-Levraud V."/>
            <person name="Whitham S.A."/>
            <person name="Yamamoto M.L."/>
            <person name="Gopalan S."/>
            <person name="Le Gall O."/>
            <person name="Candresse T."/>
            <person name="Carrington J.C."/>
            <person name="Revers F."/>
        </authorList>
    </citation>
    <scope>GENE FAMILY</scope>
</reference>
<name>MCC06_ARATH</name>
<comment type="sequence caution" evidence="3">
    <conflict type="erroneous gene model prediction">
        <sequence resource="EMBL-CDS" id="AAD23733"/>
    </conflict>
</comment>
<dbReference type="EMBL" id="AC005956">
    <property type="protein sequence ID" value="AAD23733.1"/>
    <property type="status" value="ALT_SEQ"/>
    <property type="molecule type" value="Genomic_DNA"/>
</dbReference>
<dbReference type="EMBL" id="CP002685">
    <property type="protein sequence ID" value="AEC10122.2"/>
    <property type="molecule type" value="Genomic_DNA"/>
</dbReference>
<dbReference type="EMBL" id="AK118067">
    <property type="protein sequence ID" value="BAC42698.1"/>
    <property type="molecule type" value="mRNA"/>
</dbReference>
<dbReference type="PIR" id="B84854">
    <property type="entry name" value="B84854"/>
</dbReference>
<dbReference type="RefSeq" id="NP_001189731.1">
    <property type="nucleotide sequence ID" value="NM_001202802.1"/>
</dbReference>
<dbReference type="FunCoup" id="F4IN32">
    <property type="interactions" value="13"/>
</dbReference>
<dbReference type="iPTMnet" id="F4IN32"/>
<dbReference type="PaxDb" id="3702-AT2G42460.1"/>
<dbReference type="EnsemblPlants" id="AT2G42460.1">
    <property type="protein sequence ID" value="AT2G42460.1"/>
    <property type="gene ID" value="AT2G42460"/>
</dbReference>
<dbReference type="GeneID" id="818846"/>
<dbReference type="Gramene" id="AT2G42460.1">
    <property type="protein sequence ID" value="AT2G42460.1"/>
    <property type="gene ID" value="AT2G42460"/>
</dbReference>
<dbReference type="KEGG" id="ath:AT2G42460"/>
<dbReference type="Araport" id="AT2G42460"/>
<dbReference type="TAIR" id="AT2G42460"/>
<dbReference type="eggNOG" id="KOG1987">
    <property type="taxonomic scope" value="Eukaryota"/>
</dbReference>
<dbReference type="HOGENOM" id="CLU_026537_0_0_1"/>
<dbReference type="InParanoid" id="F4IN32"/>
<dbReference type="OMA" id="SPWIPRR"/>
<dbReference type="PRO" id="PR:F4IN32"/>
<dbReference type="Proteomes" id="UP000006548">
    <property type="component" value="Chromosome 2"/>
</dbReference>
<dbReference type="ExpressionAtlas" id="F4IN32">
    <property type="expression patterns" value="baseline and differential"/>
</dbReference>
<dbReference type="CDD" id="cd00121">
    <property type="entry name" value="MATH"/>
    <property type="match status" value="1"/>
</dbReference>
<dbReference type="Gene3D" id="2.60.210.10">
    <property type="entry name" value="Apoptosis, Tumor Necrosis Factor Receptor Associated Protein 2, Chain A"/>
    <property type="match status" value="1"/>
</dbReference>
<dbReference type="InterPro" id="IPR050804">
    <property type="entry name" value="MATH-CC_domain_protein"/>
</dbReference>
<dbReference type="InterPro" id="IPR002083">
    <property type="entry name" value="MATH/TRAF_dom"/>
</dbReference>
<dbReference type="InterPro" id="IPR008974">
    <property type="entry name" value="TRAF-like"/>
</dbReference>
<dbReference type="PANTHER" id="PTHR46236:SF12">
    <property type="entry name" value="MATH DOMAIN-CONTAINING PROTEIN"/>
    <property type="match status" value="1"/>
</dbReference>
<dbReference type="PANTHER" id="PTHR46236">
    <property type="entry name" value="TRAF-LIKE SUPERFAMILY PROTEIN"/>
    <property type="match status" value="1"/>
</dbReference>
<dbReference type="Pfam" id="PF22486">
    <property type="entry name" value="MATH_2"/>
    <property type="match status" value="1"/>
</dbReference>
<dbReference type="SMART" id="SM00061">
    <property type="entry name" value="MATH"/>
    <property type="match status" value="1"/>
</dbReference>
<dbReference type="SUPFAM" id="SSF49599">
    <property type="entry name" value="TRAF domain-like"/>
    <property type="match status" value="1"/>
</dbReference>
<dbReference type="PROSITE" id="PS50144">
    <property type="entry name" value="MATH"/>
    <property type="match status" value="1"/>
</dbReference>
<sequence>MMEIDLQKTFTWKIENFSGRKFPITSTVFSSGGCECYVLIRPKGDGFEDYLSLYLCVGNPKSLQPGWKRRASLHFIVLNQSGKEVHRTSERYGLFGPEIPGWGFRTALPLTKLQDRELLENNTLFIEVYIKVTEVVHEGDETRKDMLDFKGFNVLSSQIASVSPIFAKYPKFADDIKPTSKAVKTVYLKILLGLIKTVNKPPEIFSETELIKAYSSLIDLMEVGFRVKWLKSKLDEISLARKKKVDADAARVQELEGKVKNQVELDKEKTKSHVEPKMLSFKDYASPVSPWIPRRKRSD</sequence>